<proteinExistence type="inferred from homology"/>
<name>Y028_MYCPN</name>
<gene>
    <name type="ordered locus">MPN_028</name>
    <name type="ORF">B01_orf299V</name>
    <name type="ORF">MP126</name>
</gene>
<feature type="chain" id="PRO_0000059242" description="Uncharacterized glycosyltransferase MG025 homolog">
    <location>
        <begin position="1"/>
        <end position="299"/>
    </location>
</feature>
<keyword id="KW-0328">Glycosyltransferase</keyword>
<keyword id="KW-1185">Reference proteome</keyword>
<keyword id="KW-0808">Transferase</keyword>
<dbReference type="EC" id="2.4.-.-"/>
<dbReference type="EMBL" id="U00089">
    <property type="protein sequence ID" value="AAB95774.1"/>
    <property type="molecule type" value="Genomic_DNA"/>
</dbReference>
<dbReference type="PIR" id="S73452">
    <property type="entry name" value="S73452"/>
</dbReference>
<dbReference type="RefSeq" id="NP_109716.1">
    <property type="nucleotide sequence ID" value="NC_000912.1"/>
</dbReference>
<dbReference type="RefSeq" id="WP_010874385.1">
    <property type="nucleotide sequence ID" value="NZ_OU342337.1"/>
</dbReference>
<dbReference type="SMR" id="P75086"/>
<dbReference type="STRING" id="272634.MPN_028"/>
<dbReference type="CAZy" id="GT2">
    <property type="family name" value="Glycosyltransferase Family 2"/>
</dbReference>
<dbReference type="EnsemblBacteria" id="AAB95774">
    <property type="protein sequence ID" value="AAB95774"/>
    <property type="gene ID" value="MPN_028"/>
</dbReference>
<dbReference type="KEGG" id="mpn:MPN_028"/>
<dbReference type="PATRIC" id="fig|272634.6.peg.27"/>
<dbReference type="HOGENOM" id="CLU_079042_0_0_14"/>
<dbReference type="OrthoDB" id="396512at2"/>
<dbReference type="BioCyc" id="MPNE272634:G1GJ3-41-MONOMER"/>
<dbReference type="Proteomes" id="UP000000808">
    <property type="component" value="Chromosome"/>
</dbReference>
<dbReference type="GO" id="GO:0016758">
    <property type="term" value="F:hexosyltransferase activity"/>
    <property type="evidence" value="ECO:0007669"/>
    <property type="project" value="UniProtKB-ARBA"/>
</dbReference>
<dbReference type="GO" id="GO:0009058">
    <property type="term" value="P:biosynthetic process"/>
    <property type="evidence" value="ECO:0007669"/>
    <property type="project" value="UniProtKB-ARBA"/>
</dbReference>
<dbReference type="CDD" id="cd00761">
    <property type="entry name" value="Glyco_tranf_GTA_type"/>
    <property type="match status" value="1"/>
</dbReference>
<dbReference type="Gene3D" id="3.90.550.10">
    <property type="entry name" value="Spore Coat Polysaccharide Biosynthesis Protein SpsA, Chain A"/>
    <property type="match status" value="1"/>
</dbReference>
<dbReference type="InterPro" id="IPR001173">
    <property type="entry name" value="Glyco_trans_2-like"/>
</dbReference>
<dbReference type="InterPro" id="IPR029044">
    <property type="entry name" value="Nucleotide-diphossugar_trans"/>
</dbReference>
<dbReference type="PANTHER" id="PTHR22916">
    <property type="entry name" value="GLYCOSYLTRANSFERASE"/>
    <property type="match status" value="1"/>
</dbReference>
<dbReference type="PANTHER" id="PTHR22916:SF3">
    <property type="entry name" value="UDP-GLCNAC:BETAGAL BETA-1,3-N-ACETYLGLUCOSAMINYLTRANSFERASE-LIKE PROTEIN 1"/>
    <property type="match status" value="1"/>
</dbReference>
<dbReference type="Pfam" id="PF00535">
    <property type="entry name" value="Glycos_transf_2"/>
    <property type="match status" value="1"/>
</dbReference>
<dbReference type="SUPFAM" id="SSF53448">
    <property type="entry name" value="Nucleotide-diphospho-sugar transferases"/>
    <property type="match status" value="1"/>
</dbReference>
<protein>
    <recommendedName>
        <fullName>Uncharacterized glycosyltransferase MG025 homolog</fullName>
        <ecNumber>2.4.-.-</ecNumber>
    </recommendedName>
</protein>
<reference key="1">
    <citation type="journal article" date="1996" name="Nucleic Acids Res.">
        <title>Complete sequence analysis of the genome of the bacterium Mycoplasma pneumoniae.</title>
        <authorList>
            <person name="Himmelreich R."/>
            <person name="Hilbert H."/>
            <person name="Plagens H."/>
            <person name="Pirkl E."/>
            <person name="Li B.-C."/>
            <person name="Herrmann R."/>
        </authorList>
    </citation>
    <scope>NUCLEOTIDE SEQUENCE [LARGE SCALE GENOMIC DNA]</scope>
    <source>
        <strain>ATCC 29342 / M129 / Subtype 1</strain>
    </source>
</reference>
<comment type="similarity">
    <text evidence="1">Belongs to the glycosyltransferase 2 family.</text>
</comment>
<evidence type="ECO:0000305" key="1"/>
<accession>P75086</accession>
<sequence>MQFKYLFTVIIPTYNCGQYIPKALDSLLLQGEYFTKTQVLIVNDGSTDNTKQIVEPYTQQYSNIEYLEKPNGNWGSVVNFVKQNQLAKGQYITVLDSDDYFLANAFQRVAAHFGHDMIVSAFYCYISPKRRRFLKPYFGKTGVIEQKTKLRTPHSQPLAKFYRHEIFHLLDPLKEKLFYQDCLLYHNAINKVQSVFYICEPLAVWYATRPGNSTTMPWNNADKFQAWCDLLKQMNLYGAGIVIYIYTMLPGFLKELKRQQLVLDLAKKPAYTWLPQPLAFLFGGLMALRTRKYIRYPKN</sequence>
<organism>
    <name type="scientific">Mycoplasma pneumoniae (strain ATCC 29342 / M129 / Subtype 1)</name>
    <name type="common">Mycoplasmoides pneumoniae</name>
    <dbReference type="NCBI Taxonomy" id="272634"/>
    <lineage>
        <taxon>Bacteria</taxon>
        <taxon>Bacillati</taxon>
        <taxon>Mycoplasmatota</taxon>
        <taxon>Mycoplasmoidales</taxon>
        <taxon>Mycoplasmoidaceae</taxon>
        <taxon>Mycoplasmoides</taxon>
    </lineage>
</organism>